<keyword id="KW-0238">DNA-binding</keyword>
<name>Y008_THEVO</name>
<sequence>MSDDEELEKIRRRQMEELQRQAMQRQMAEEEEKQREIEKARRQQILRQILDPSARERLNNVRLVRPDLADNVENQLIQLASMGRINRIIKESDIIDILSKLTENKREPKIERRSK</sequence>
<proteinExistence type="inferred from homology"/>
<organism>
    <name type="scientific">Thermoplasma volcanium (strain ATCC 51530 / DSM 4299 / JCM 9571 / NBRC 15438 / GSS1)</name>
    <dbReference type="NCBI Taxonomy" id="273116"/>
    <lineage>
        <taxon>Archaea</taxon>
        <taxon>Methanobacteriati</taxon>
        <taxon>Thermoplasmatota</taxon>
        <taxon>Thermoplasmata</taxon>
        <taxon>Thermoplasmatales</taxon>
        <taxon>Thermoplasmataceae</taxon>
        <taxon>Thermoplasma</taxon>
    </lineage>
</organism>
<protein>
    <recommendedName>
        <fullName evidence="1">DNA-binding protein TV0008</fullName>
    </recommendedName>
</protein>
<dbReference type="EMBL" id="BA000011">
    <property type="protein sequence ID" value="BAB59150.1"/>
    <property type="molecule type" value="Genomic_DNA"/>
</dbReference>
<dbReference type="RefSeq" id="WP_048054050.1">
    <property type="nucleotide sequence ID" value="NC_002689.2"/>
</dbReference>
<dbReference type="SMR" id="Q97CU3"/>
<dbReference type="STRING" id="273116.gene:9380773"/>
<dbReference type="PaxDb" id="273116-14324222"/>
<dbReference type="GeneID" id="1441493"/>
<dbReference type="KEGG" id="tvo:TVG0008501"/>
<dbReference type="eggNOG" id="arCOG04179">
    <property type="taxonomic scope" value="Archaea"/>
</dbReference>
<dbReference type="HOGENOM" id="CLU_122978_3_0_2"/>
<dbReference type="OrthoDB" id="7912at2157"/>
<dbReference type="PhylomeDB" id="Q97CU3"/>
<dbReference type="Proteomes" id="UP000001017">
    <property type="component" value="Chromosome"/>
</dbReference>
<dbReference type="GO" id="GO:0005829">
    <property type="term" value="C:cytosol"/>
    <property type="evidence" value="ECO:0007669"/>
    <property type="project" value="TreeGrafter"/>
</dbReference>
<dbReference type="GO" id="GO:0003677">
    <property type="term" value="F:DNA binding"/>
    <property type="evidence" value="ECO:0007669"/>
    <property type="project" value="UniProtKB-UniRule"/>
</dbReference>
<dbReference type="Gene3D" id="1.10.8.140">
    <property type="entry name" value="PDCD5-like"/>
    <property type="match status" value="1"/>
</dbReference>
<dbReference type="HAMAP" id="MF_00026">
    <property type="entry name" value="dsDNA_bind"/>
    <property type="match status" value="1"/>
</dbReference>
<dbReference type="InterPro" id="IPR022889">
    <property type="entry name" value="DNA_bind_arc"/>
</dbReference>
<dbReference type="InterPro" id="IPR002836">
    <property type="entry name" value="PDCD5-like"/>
</dbReference>
<dbReference type="InterPro" id="IPR036883">
    <property type="entry name" value="PDCD5-like_sf"/>
</dbReference>
<dbReference type="NCBIfam" id="NF003268">
    <property type="entry name" value="PRK04239.1"/>
    <property type="match status" value="1"/>
</dbReference>
<dbReference type="PANTHER" id="PTHR10840">
    <property type="entry name" value="PROGRAMMED CELL DEATH PROTEIN 5"/>
    <property type="match status" value="1"/>
</dbReference>
<dbReference type="PANTHER" id="PTHR10840:SF0">
    <property type="entry name" value="PROGRAMMED CELL DEATH PROTEIN 5"/>
    <property type="match status" value="1"/>
</dbReference>
<dbReference type="Pfam" id="PF01984">
    <property type="entry name" value="dsDNA_bind"/>
    <property type="match status" value="1"/>
</dbReference>
<dbReference type="PIRSF" id="PIRSF015730">
    <property type="entry name" value="TFAR19"/>
    <property type="match status" value="1"/>
</dbReference>
<dbReference type="SUPFAM" id="SSF46950">
    <property type="entry name" value="Double-stranded DNA-binding domain"/>
    <property type="match status" value="1"/>
</dbReference>
<comment type="similarity">
    <text evidence="1">Belongs to the PDCD5 family.</text>
</comment>
<accession>Q97CU3</accession>
<feature type="chain" id="PRO_0000121568" description="DNA-binding protein TV0008">
    <location>
        <begin position="1"/>
        <end position="115"/>
    </location>
</feature>
<feature type="region of interest" description="Disordered" evidence="2">
    <location>
        <begin position="18"/>
        <end position="37"/>
    </location>
</feature>
<gene>
    <name type="ordered locus">TV0008</name>
    <name type="ORF">TVG0008501</name>
</gene>
<reference key="1">
    <citation type="journal article" date="2000" name="Proc. Natl. Acad. Sci. U.S.A.">
        <title>Archaeal adaptation to higher temperatures revealed by genomic sequence of Thermoplasma volcanium.</title>
        <authorList>
            <person name="Kawashima T."/>
            <person name="Amano N."/>
            <person name="Koike H."/>
            <person name="Makino S."/>
            <person name="Higuchi S."/>
            <person name="Kawashima-Ohya Y."/>
            <person name="Watanabe K."/>
            <person name="Yamazaki M."/>
            <person name="Kanehori K."/>
            <person name="Kawamoto T."/>
            <person name="Nunoshiba T."/>
            <person name="Yamamoto Y."/>
            <person name="Aramaki H."/>
            <person name="Makino K."/>
            <person name="Suzuki M."/>
        </authorList>
    </citation>
    <scope>NUCLEOTIDE SEQUENCE [LARGE SCALE GENOMIC DNA]</scope>
    <source>
        <strain>ATCC 51530 / DSM 4299 / JCM 9571 / NBRC 15438 / GSS1</strain>
    </source>
</reference>
<evidence type="ECO:0000255" key="1">
    <source>
        <dbReference type="HAMAP-Rule" id="MF_00026"/>
    </source>
</evidence>
<evidence type="ECO:0000256" key="2">
    <source>
        <dbReference type="SAM" id="MobiDB-lite"/>
    </source>
</evidence>